<keyword id="KW-0010">Activator</keyword>
<keyword id="KW-0963">Cytoplasm</keyword>
<keyword id="KW-0238">DNA-binding</keyword>
<keyword id="KW-0479">Metal-binding</keyword>
<keyword id="KW-0539">Nucleus</keyword>
<keyword id="KW-0677">Repeat</keyword>
<keyword id="KW-0678">Repressor</keyword>
<keyword id="KW-0804">Transcription</keyword>
<keyword id="KW-0805">Transcription regulation</keyword>
<keyword id="KW-0862">Zinc</keyword>
<keyword id="KW-0863">Zinc-finger</keyword>
<name>PACC_GIBMO</name>
<protein>
    <recommendedName>
        <fullName>pH-response transcription factor pacC/RIM101</fullName>
    </recommendedName>
</protein>
<sequence>MSPSAPEQKPQLQQQQQQQQQGSSSGDSSSGSVNDSKSVTPAPSATSSTSQSSTAPSTSSDDNLICRWNACNQKFPAPEALYEHICERHVGRKSTNNLNLTCQWNSCRTTTVKRDHITSHIRVHVPLKPHKCEFCGKSFKRPQDLKKHVKTHADDSVLVRPSQDPQGGLNYRPQPPKGPSSYYDHTGQMRTNAAAFAHQAGHPSGGYYAPQPSTNYGLYFNQPPINNARTEHLGYSAAAGGYDRKRTYDMVDDFFGSAKRRQIDPSSYAQIGRSLMPLHGNLSVPNGPMTATEQYMPQPAPAPVHAGPTPSQNPLAQQYYLPMPSARTQKDLIHIDTILGQMQDTIYENANHATAGVHIHHAENGFNGYRNTPSPPTSHRSPTGMHVGADGYQPVSAASMASPMTAISSTGTPAVTPPSSSMSYTSGHSPSPSSSAMSPQSRHGSTASVMYPTLPTSLPAVSQGFGHSATTTLGPSFDGSERRRYSGGMLQRARAGPLPLPHEDTSGASTPKASESALSVGSPSSESDVSDATREREEQYDRWLENMRVIETLREYVRGRLERKEFVEDNESPQSSHSDAMDVDPKSPQAPPRELGTPREGSSLYPILRMPGA</sequence>
<gene>
    <name type="primary">PAC1</name>
</gene>
<evidence type="ECO:0000250" key="1"/>
<evidence type="ECO:0000255" key="2">
    <source>
        <dbReference type="PROSITE-ProRule" id="PRU00042"/>
    </source>
</evidence>
<evidence type="ECO:0000256" key="3">
    <source>
        <dbReference type="SAM" id="MobiDB-lite"/>
    </source>
</evidence>
<evidence type="ECO:0000305" key="4"/>
<comment type="function">
    <text evidence="1">Transcription factor that mediates regulation of both acid- and alkaline-expressed genes in response to ambient pH. At alkaline ambient pH, activates transcription of alkaline-expressed genes (including PAC1 itself) and represses transcription of acid-expressed genes (By similarity).</text>
</comment>
<comment type="subunit">
    <text evidence="1">Binds to DNA.</text>
</comment>
<comment type="subcellular location">
    <subcellularLocation>
        <location evidence="1">Cytoplasm</location>
    </subcellularLocation>
    <subcellularLocation>
        <location evidence="1">Nucleus</location>
    </subcellularLocation>
</comment>
<comment type="PTM">
    <text evidence="1">Activated by C-terminal proteolytic cleavage by signaling protease (probably palB/RIM13) at neutral to alkaline ambient pH.</text>
</comment>
<comment type="similarity">
    <text evidence="4">Belongs to the pacC/RIM101 family.</text>
</comment>
<proteinExistence type="inferred from homology"/>
<feature type="chain" id="PRO_0000046835" description="pH-response transcription factor pacC/RIM101">
    <location>
        <begin position="1"/>
        <end position="613"/>
    </location>
</feature>
<feature type="zinc finger region" description="C2H2-type 1" evidence="2">
    <location>
        <begin position="64"/>
        <end position="89"/>
    </location>
</feature>
<feature type="zinc finger region" description="C2H2-type 2" evidence="2">
    <location>
        <begin position="100"/>
        <end position="124"/>
    </location>
</feature>
<feature type="zinc finger region" description="C2H2-type 3" evidence="2">
    <location>
        <begin position="130"/>
        <end position="152"/>
    </location>
</feature>
<feature type="region of interest" description="Disordered" evidence="3">
    <location>
        <begin position="1"/>
        <end position="61"/>
    </location>
</feature>
<feature type="region of interest" description="Disordered" evidence="3">
    <location>
        <begin position="146"/>
        <end position="186"/>
    </location>
</feature>
<feature type="region of interest" description="Disordered" evidence="3">
    <location>
        <begin position="371"/>
        <end position="391"/>
    </location>
</feature>
<feature type="region of interest" description="Disordered" evidence="3">
    <location>
        <begin position="406"/>
        <end position="535"/>
    </location>
</feature>
<feature type="region of interest" description="Disordered" evidence="3">
    <location>
        <begin position="565"/>
        <end position="613"/>
    </location>
</feature>
<feature type="short sequence motif" description="YPX[LI] motif 1">
    <location>
        <begin position="451"/>
        <end position="454"/>
    </location>
</feature>
<feature type="short sequence motif" description="YPX[LI] motif 2">
    <location>
        <begin position="605"/>
        <end position="608"/>
    </location>
</feature>
<feature type="compositionally biased region" description="Low complexity" evidence="3">
    <location>
        <begin position="11"/>
        <end position="60"/>
    </location>
</feature>
<feature type="compositionally biased region" description="Basic and acidic residues" evidence="3">
    <location>
        <begin position="146"/>
        <end position="157"/>
    </location>
</feature>
<feature type="compositionally biased region" description="Low complexity" evidence="3">
    <location>
        <begin position="417"/>
        <end position="441"/>
    </location>
</feature>
<feature type="compositionally biased region" description="Polar residues" evidence="3">
    <location>
        <begin position="442"/>
        <end position="460"/>
    </location>
</feature>
<feature type="compositionally biased region" description="Polar residues" evidence="3">
    <location>
        <begin position="506"/>
        <end position="517"/>
    </location>
</feature>
<dbReference type="EMBL" id="AY216461">
    <property type="protein sequence ID" value="AAO64251.1"/>
    <property type="molecule type" value="Genomic_DNA"/>
</dbReference>
<dbReference type="GO" id="GO:0005737">
    <property type="term" value="C:cytoplasm"/>
    <property type="evidence" value="ECO:0007669"/>
    <property type="project" value="UniProtKB-SubCell"/>
</dbReference>
<dbReference type="GO" id="GO:0005634">
    <property type="term" value="C:nucleus"/>
    <property type="evidence" value="ECO:0007669"/>
    <property type="project" value="UniProtKB-SubCell"/>
</dbReference>
<dbReference type="GO" id="GO:0003677">
    <property type="term" value="F:DNA binding"/>
    <property type="evidence" value="ECO:0007669"/>
    <property type="project" value="UniProtKB-KW"/>
</dbReference>
<dbReference type="GO" id="GO:0008270">
    <property type="term" value="F:zinc ion binding"/>
    <property type="evidence" value="ECO:0007669"/>
    <property type="project" value="UniProtKB-KW"/>
</dbReference>
<dbReference type="GO" id="GO:0045944">
    <property type="term" value="P:positive regulation of transcription by RNA polymerase II"/>
    <property type="evidence" value="ECO:0007669"/>
    <property type="project" value="TreeGrafter"/>
</dbReference>
<dbReference type="FunFam" id="3.30.160.60:FF:000458">
    <property type="entry name" value="pH-response transcription factor pacC/RIM101"/>
    <property type="match status" value="1"/>
</dbReference>
<dbReference type="FunFam" id="3.30.160.60:FF:001875">
    <property type="entry name" value="pH-response transcription factor pacC/RIM101"/>
    <property type="match status" value="1"/>
</dbReference>
<dbReference type="Gene3D" id="3.30.160.60">
    <property type="entry name" value="Classic Zinc Finger"/>
    <property type="match status" value="2"/>
</dbReference>
<dbReference type="InterPro" id="IPR050806">
    <property type="entry name" value="pacC/RIM101"/>
</dbReference>
<dbReference type="InterPro" id="IPR036236">
    <property type="entry name" value="Znf_C2H2_sf"/>
</dbReference>
<dbReference type="InterPro" id="IPR013087">
    <property type="entry name" value="Znf_C2H2_type"/>
</dbReference>
<dbReference type="PANTHER" id="PTHR47257">
    <property type="entry name" value="PH-RESPONSE TRANSCRIPTION FACTOR PACC/RIM101"/>
    <property type="match status" value="1"/>
</dbReference>
<dbReference type="PANTHER" id="PTHR47257:SF1">
    <property type="entry name" value="PH-RESPONSE TRANSCRIPTION FACTOR PACC_RIM101"/>
    <property type="match status" value="1"/>
</dbReference>
<dbReference type="Pfam" id="PF00096">
    <property type="entry name" value="zf-C2H2"/>
    <property type="match status" value="1"/>
</dbReference>
<dbReference type="SMART" id="SM00355">
    <property type="entry name" value="ZnF_C2H2"/>
    <property type="match status" value="3"/>
</dbReference>
<dbReference type="SUPFAM" id="SSF57667">
    <property type="entry name" value="beta-beta-alpha zinc fingers"/>
    <property type="match status" value="2"/>
</dbReference>
<dbReference type="PROSITE" id="PS00028">
    <property type="entry name" value="ZINC_FINGER_C2H2_1"/>
    <property type="match status" value="2"/>
</dbReference>
<dbReference type="PROSITE" id="PS50157">
    <property type="entry name" value="ZINC_FINGER_C2H2_2"/>
    <property type="match status" value="3"/>
</dbReference>
<accession>Q873X0</accession>
<reference key="1">
    <citation type="journal article" date="2003" name="Appl. Environ. Microbiol.">
        <title>PAC1, a pH-regulatory gene from Fusarium verticillioides.</title>
        <authorList>
            <person name="Flaherty J.E."/>
            <person name="Pirttilae A.M."/>
            <person name="Bluhm B.H."/>
            <person name="Woloshuk C.P."/>
        </authorList>
    </citation>
    <scope>NUCLEOTIDE SEQUENCE [GENOMIC DNA]</scope>
    <source>
        <strain>M3125 / FGSC 7600</strain>
    </source>
</reference>
<organism>
    <name type="scientific">Gibberella moniliformis</name>
    <name type="common">Maize ear and stalk rot fungus</name>
    <name type="synonym">Fusarium verticillioides</name>
    <dbReference type="NCBI Taxonomy" id="117187"/>
    <lineage>
        <taxon>Eukaryota</taxon>
        <taxon>Fungi</taxon>
        <taxon>Dikarya</taxon>
        <taxon>Ascomycota</taxon>
        <taxon>Pezizomycotina</taxon>
        <taxon>Sordariomycetes</taxon>
        <taxon>Hypocreomycetidae</taxon>
        <taxon>Hypocreales</taxon>
        <taxon>Nectriaceae</taxon>
        <taxon>Fusarium</taxon>
        <taxon>Fusarium fujikuroi species complex</taxon>
    </lineage>
</organism>